<evidence type="ECO:0000250" key="1">
    <source>
        <dbReference type="UniProtKB" id="A0A067SLB9"/>
    </source>
</evidence>
<evidence type="ECO:0000269" key="2">
    <source>
    </source>
</evidence>
<evidence type="ECO:0000269" key="3">
    <source>
    </source>
</evidence>
<evidence type="ECO:0000303" key="4">
    <source>
    </source>
</evidence>
<evidence type="ECO:0000303" key="5">
    <source>
    </source>
</evidence>
<evidence type="ECO:0000305" key="6"/>
<evidence type="ECO:0000305" key="7">
    <source>
    </source>
</evidence>
<accession>P0CU57</accession>
<reference key="1">
    <citation type="journal article" date="1993" name="Peptides">
        <title>Immunosuppressive activity in the series of cycloamanide peptides from mushrooms.</title>
        <authorList>
            <person name="Wieczorek Z."/>
            <person name="Siemion I.Z."/>
            <person name="Zimecki M."/>
            <person name="Bolewska-Pedyczak E."/>
            <person name="Wieland T."/>
        </authorList>
    </citation>
    <scope>FUNCTION</scope>
</reference>
<reference key="2">
    <citation type="journal article" date="2018" name="ACS Synth. Biol.">
        <title>Versatility of prolyl oligopeptidase B in peptide macrocyclization.</title>
        <authorList>
            <person name="Sgambelluri R.M."/>
            <person name="Smith M.O."/>
            <person name="Walton J.D."/>
        </authorList>
    </citation>
    <scope>CYCLIZATION</scope>
</reference>
<proteinExistence type="inferred from homology"/>
<organism>
    <name type="scientific">Amanita phalloides</name>
    <name type="common">Death cap</name>
    <dbReference type="NCBI Taxonomy" id="67723"/>
    <lineage>
        <taxon>Eukaryota</taxon>
        <taxon>Fungi</taxon>
        <taxon>Dikarya</taxon>
        <taxon>Basidiomycota</taxon>
        <taxon>Agaricomycotina</taxon>
        <taxon>Agaricomycetes</taxon>
        <taxon>Agaricomycetidae</taxon>
        <taxon>Agaricales</taxon>
        <taxon>Pluteineae</taxon>
        <taxon>Amanitaceae</taxon>
        <taxon>Amanita</taxon>
    </lineage>
</organism>
<sequence length="6" mass="637">VFFAGP</sequence>
<dbReference type="GO" id="GO:0090729">
    <property type="term" value="F:toxin activity"/>
    <property type="evidence" value="ECO:0007669"/>
    <property type="project" value="UniProtKB-KW"/>
</dbReference>
<name>CYAA_AMAPH</name>
<protein>
    <recommendedName>
        <fullName evidence="5">Cycloamanide A</fullName>
        <shortName evidence="5">CyA A</shortName>
        <shortName evidence="4">Cyl A</shortName>
    </recommendedName>
</protein>
<keyword id="KW-0800">Toxin</keyword>
<feature type="peptide" id="PRO_0000443777" description="Cycloamanide A" evidence="7">
    <location>
        <begin position="1"/>
        <end position="6"/>
    </location>
</feature>
<feature type="cross-link" description="Cyclopeptide (Val-Pro)" evidence="7">
    <location>
        <begin position="1"/>
        <end position="6"/>
    </location>
</feature>
<comment type="function">
    <text evidence="3">Cyclic hexapeptide that belongs to the MSDIN-like toxin family responsible for a large number of food poisoning cases and deaths (PubMed:8441706). Cycloaminide B is non-toxic to mammals but shows immunosuppressive activity, probably through the inhibition of the action of interleukin-1 and interleukin-2 (PubMed:8441706).</text>
</comment>
<comment type="PTM">
    <text evidence="1 2">Processed by the macrocyclase-peptidase enzyme POPB to yield a cyclic hexapeptide (PubMed:28866879). POPB first removes 10 residues from the N-terminus (By similarity). Conformational trapping of the remaining peptide forces the enzyme to release this intermediate rather than proceed to macrocyclization (By similarity). The enzyme rebinds the remaining peptide in a different conformation and catalyzes macrocyclization of the N-terminal 6 residues (PubMed:28866879).</text>
</comment>
<comment type="similarity">
    <text evidence="6">Belongs to the MSDIN fungal toxin family.</text>
</comment>